<sequence length="248" mass="27260">MTEATRILLGVNIDHVATLRQARGTRYPDPVKAALDAEEAGADGITVHLREDRRHIQERDVRVLKEVLQTRMNFEMGVTEEMLAFAEEIRPAHSCLVPERREELTTEGGLDVAGQEQRIRDAVRRLAAVGSEVSLFIDPDPRQIEASARVGAPAIELHTGRYADAEDPEEQARELQRVREGVALGRSLGLIVNAGHGLHYHNVEPVAAIDGINELNIGHAIVAHALFVGFRQAVAEMKALMLAAATKR</sequence>
<proteinExistence type="inferred from homology"/>
<accession>Q9I5G5</accession>
<comment type="function">
    <text evidence="1">Catalyzes the complicated ring closure reaction between the two acyclic compounds 1-deoxy-D-xylulose-5-phosphate (DXP) and 3-amino-2-oxopropyl phosphate (1-amino-acetone-3-phosphate or AAP) to form pyridoxine 5'-phosphate (PNP) and inorganic phosphate.</text>
</comment>
<comment type="catalytic activity">
    <reaction evidence="1">
        <text>3-amino-2-oxopropyl phosphate + 1-deoxy-D-xylulose 5-phosphate = pyridoxine 5'-phosphate + phosphate + 2 H2O + H(+)</text>
        <dbReference type="Rhea" id="RHEA:15265"/>
        <dbReference type="ChEBI" id="CHEBI:15377"/>
        <dbReference type="ChEBI" id="CHEBI:15378"/>
        <dbReference type="ChEBI" id="CHEBI:43474"/>
        <dbReference type="ChEBI" id="CHEBI:57279"/>
        <dbReference type="ChEBI" id="CHEBI:57792"/>
        <dbReference type="ChEBI" id="CHEBI:58589"/>
        <dbReference type="EC" id="2.6.99.2"/>
    </reaction>
</comment>
<comment type="pathway">
    <text evidence="1">Cofactor biosynthesis; pyridoxine 5'-phosphate biosynthesis; pyridoxine 5'-phosphate from D-erythrose 4-phosphate: step 5/5.</text>
</comment>
<comment type="subunit">
    <text evidence="1">Homooctamer; tetramer of dimers.</text>
</comment>
<comment type="subcellular location">
    <subcellularLocation>
        <location evidence="1">Cytoplasm</location>
    </subcellularLocation>
</comment>
<comment type="similarity">
    <text evidence="1">Belongs to the PNP synthase family.</text>
</comment>
<feature type="chain" id="PRO_0000190123" description="Pyridoxine 5'-phosphate synthase">
    <location>
        <begin position="1"/>
        <end position="248"/>
    </location>
</feature>
<feature type="active site" description="Proton acceptor" evidence="1">
    <location>
        <position position="48"/>
    </location>
</feature>
<feature type="active site" description="Proton acceptor" evidence="1">
    <location>
        <position position="75"/>
    </location>
</feature>
<feature type="active site" description="Proton donor" evidence="1">
    <location>
        <position position="196"/>
    </location>
</feature>
<feature type="binding site" evidence="1">
    <location>
        <position position="12"/>
    </location>
    <ligand>
        <name>3-amino-2-oxopropyl phosphate</name>
        <dbReference type="ChEBI" id="CHEBI:57279"/>
    </ligand>
</feature>
<feature type="binding site" evidence="1">
    <location>
        <begin position="14"/>
        <end position="15"/>
    </location>
    <ligand>
        <name>1-deoxy-D-xylulose 5-phosphate</name>
        <dbReference type="ChEBI" id="CHEBI:57792"/>
    </ligand>
</feature>
<feature type="binding site" evidence="1">
    <location>
        <position position="23"/>
    </location>
    <ligand>
        <name>3-amino-2-oxopropyl phosphate</name>
        <dbReference type="ChEBI" id="CHEBI:57279"/>
    </ligand>
</feature>
<feature type="binding site" evidence="1">
    <location>
        <position position="50"/>
    </location>
    <ligand>
        <name>1-deoxy-D-xylulose 5-phosphate</name>
        <dbReference type="ChEBI" id="CHEBI:57792"/>
    </ligand>
</feature>
<feature type="binding site" evidence="1">
    <location>
        <position position="55"/>
    </location>
    <ligand>
        <name>1-deoxy-D-xylulose 5-phosphate</name>
        <dbReference type="ChEBI" id="CHEBI:57792"/>
    </ligand>
</feature>
<feature type="binding site" evidence="1">
    <location>
        <position position="105"/>
    </location>
    <ligand>
        <name>1-deoxy-D-xylulose 5-phosphate</name>
        <dbReference type="ChEBI" id="CHEBI:57792"/>
    </ligand>
</feature>
<feature type="binding site" evidence="1">
    <location>
        <position position="197"/>
    </location>
    <ligand>
        <name>3-amino-2-oxopropyl phosphate</name>
        <dbReference type="ChEBI" id="CHEBI:57279"/>
    </ligand>
</feature>
<feature type="binding site" evidence="1">
    <location>
        <begin position="218"/>
        <end position="219"/>
    </location>
    <ligand>
        <name>3-amino-2-oxopropyl phosphate</name>
        <dbReference type="ChEBI" id="CHEBI:57279"/>
    </ligand>
</feature>
<feature type="site" description="Transition state stabilizer" evidence="1">
    <location>
        <position position="156"/>
    </location>
</feature>
<keyword id="KW-0963">Cytoplasm</keyword>
<keyword id="KW-0664">Pyridoxine biosynthesis</keyword>
<keyword id="KW-1185">Reference proteome</keyword>
<keyword id="KW-0808">Transferase</keyword>
<reference key="1">
    <citation type="journal article" date="2000" name="Nature">
        <title>Complete genome sequence of Pseudomonas aeruginosa PAO1, an opportunistic pathogen.</title>
        <authorList>
            <person name="Stover C.K."/>
            <person name="Pham X.-Q.T."/>
            <person name="Erwin A.L."/>
            <person name="Mizoguchi S.D."/>
            <person name="Warrener P."/>
            <person name="Hickey M.J."/>
            <person name="Brinkman F.S.L."/>
            <person name="Hufnagle W.O."/>
            <person name="Kowalik D.J."/>
            <person name="Lagrou M."/>
            <person name="Garber R.L."/>
            <person name="Goltry L."/>
            <person name="Tolentino E."/>
            <person name="Westbrock-Wadman S."/>
            <person name="Yuan Y."/>
            <person name="Brody L.L."/>
            <person name="Coulter S.N."/>
            <person name="Folger K.R."/>
            <person name="Kas A."/>
            <person name="Larbig K."/>
            <person name="Lim R.M."/>
            <person name="Smith K.A."/>
            <person name="Spencer D.H."/>
            <person name="Wong G.K.-S."/>
            <person name="Wu Z."/>
            <person name="Paulsen I.T."/>
            <person name="Reizer J."/>
            <person name="Saier M.H. Jr."/>
            <person name="Hancock R.E.W."/>
            <person name="Lory S."/>
            <person name="Olson M.V."/>
        </authorList>
    </citation>
    <scope>NUCLEOTIDE SEQUENCE [LARGE SCALE GENOMIC DNA]</scope>
    <source>
        <strain>ATCC 15692 / DSM 22644 / CIP 104116 / JCM 14847 / LMG 12228 / 1C / PRS 101 / PAO1</strain>
    </source>
</reference>
<dbReference type="EC" id="2.6.99.2" evidence="1"/>
<dbReference type="EMBL" id="AE004091">
    <property type="protein sequence ID" value="AAG04162.1"/>
    <property type="molecule type" value="Genomic_DNA"/>
</dbReference>
<dbReference type="PIR" id="H83548">
    <property type="entry name" value="H83548"/>
</dbReference>
<dbReference type="RefSeq" id="NP_249464.1">
    <property type="nucleotide sequence ID" value="NC_002516.2"/>
</dbReference>
<dbReference type="RefSeq" id="WP_003101974.1">
    <property type="nucleotide sequence ID" value="NZ_QZGE01000007.1"/>
</dbReference>
<dbReference type="SMR" id="Q9I5G5"/>
<dbReference type="FunCoup" id="Q9I5G5">
    <property type="interactions" value="439"/>
</dbReference>
<dbReference type="STRING" id="208964.PA0773"/>
<dbReference type="PaxDb" id="208964-PA0773"/>
<dbReference type="GeneID" id="878131"/>
<dbReference type="KEGG" id="pae:PA0773"/>
<dbReference type="PATRIC" id="fig|208964.12.peg.803"/>
<dbReference type="PseudoCAP" id="PA0773"/>
<dbReference type="HOGENOM" id="CLU_074563_0_0_6"/>
<dbReference type="InParanoid" id="Q9I5G5"/>
<dbReference type="OrthoDB" id="9806590at2"/>
<dbReference type="PhylomeDB" id="Q9I5G5"/>
<dbReference type="BioCyc" id="PAER208964:G1FZ6-786-MONOMER"/>
<dbReference type="UniPathway" id="UPA00244">
    <property type="reaction ID" value="UER00313"/>
</dbReference>
<dbReference type="Proteomes" id="UP000002438">
    <property type="component" value="Chromosome"/>
</dbReference>
<dbReference type="GO" id="GO:0005829">
    <property type="term" value="C:cytosol"/>
    <property type="evidence" value="ECO:0000318"/>
    <property type="project" value="GO_Central"/>
</dbReference>
<dbReference type="GO" id="GO:0033856">
    <property type="term" value="F:pyridoxine 5'-phosphate synthase activity"/>
    <property type="evidence" value="ECO:0000318"/>
    <property type="project" value="GO_Central"/>
</dbReference>
<dbReference type="GO" id="GO:0008615">
    <property type="term" value="P:pyridoxine biosynthetic process"/>
    <property type="evidence" value="ECO:0000318"/>
    <property type="project" value="GO_Central"/>
</dbReference>
<dbReference type="CDD" id="cd00003">
    <property type="entry name" value="PNPsynthase"/>
    <property type="match status" value="1"/>
</dbReference>
<dbReference type="FunFam" id="3.20.20.70:FF:000042">
    <property type="entry name" value="Pyridoxine 5'-phosphate synthase"/>
    <property type="match status" value="1"/>
</dbReference>
<dbReference type="Gene3D" id="3.20.20.70">
    <property type="entry name" value="Aldolase class I"/>
    <property type="match status" value="1"/>
</dbReference>
<dbReference type="HAMAP" id="MF_00279">
    <property type="entry name" value="PdxJ"/>
    <property type="match status" value="1"/>
</dbReference>
<dbReference type="InterPro" id="IPR013785">
    <property type="entry name" value="Aldolase_TIM"/>
</dbReference>
<dbReference type="InterPro" id="IPR004569">
    <property type="entry name" value="PyrdxlP_synth_PdxJ"/>
</dbReference>
<dbReference type="InterPro" id="IPR036130">
    <property type="entry name" value="Pyridoxine-5'_phos_synth"/>
</dbReference>
<dbReference type="NCBIfam" id="TIGR00559">
    <property type="entry name" value="pdxJ"/>
    <property type="match status" value="1"/>
</dbReference>
<dbReference type="NCBIfam" id="NF003623">
    <property type="entry name" value="PRK05265.1-1"/>
    <property type="match status" value="1"/>
</dbReference>
<dbReference type="NCBIfam" id="NF003625">
    <property type="entry name" value="PRK05265.1-3"/>
    <property type="match status" value="1"/>
</dbReference>
<dbReference type="NCBIfam" id="NF003627">
    <property type="entry name" value="PRK05265.1-5"/>
    <property type="match status" value="1"/>
</dbReference>
<dbReference type="PANTHER" id="PTHR30456">
    <property type="entry name" value="PYRIDOXINE 5'-PHOSPHATE SYNTHASE"/>
    <property type="match status" value="1"/>
</dbReference>
<dbReference type="PANTHER" id="PTHR30456:SF0">
    <property type="entry name" value="PYRIDOXINE 5'-PHOSPHATE SYNTHASE"/>
    <property type="match status" value="1"/>
</dbReference>
<dbReference type="Pfam" id="PF03740">
    <property type="entry name" value="PdxJ"/>
    <property type="match status" value="1"/>
</dbReference>
<dbReference type="SUPFAM" id="SSF63892">
    <property type="entry name" value="Pyridoxine 5'-phosphate synthase"/>
    <property type="match status" value="1"/>
</dbReference>
<organism>
    <name type="scientific">Pseudomonas aeruginosa (strain ATCC 15692 / DSM 22644 / CIP 104116 / JCM 14847 / LMG 12228 / 1C / PRS 101 / PAO1)</name>
    <dbReference type="NCBI Taxonomy" id="208964"/>
    <lineage>
        <taxon>Bacteria</taxon>
        <taxon>Pseudomonadati</taxon>
        <taxon>Pseudomonadota</taxon>
        <taxon>Gammaproteobacteria</taxon>
        <taxon>Pseudomonadales</taxon>
        <taxon>Pseudomonadaceae</taxon>
        <taxon>Pseudomonas</taxon>
    </lineage>
</organism>
<gene>
    <name evidence="1" type="primary">pdxJ</name>
    <name type="ordered locus">PA0773</name>
</gene>
<name>PDXJ_PSEAE</name>
<evidence type="ECO:0000255" key="1">
    <source>
        <dbReference type="HAMAP-Rule" id="MF_00279"/>
    </source>
</evidence>
<protein>
    <recommendedName>
        <fullName evidence="1">Pyridoxine 5'-phosphate synthase</fullName>
        <shortName evidence="1">PNP synthase</shortName>
        <ecNumber evidence="1">2.6.99.2</ecNumber>
    </recommendedName>
</protein>